<reference key="1">
    <citation type="journal article" date="1995" name="Science">
        <title>The minimal gene complement of Mycoplasma genitalium.</title>
        <authorList>
            <person name="Fraser C.M."/>
            <person name="Gocayne J.D."/>
            <person name="White O."/>
            <person name="Adams M.D."/>
            <person name="Clayton R.A."/>
            <person name="Fleischmann R.D."/>
            <person name="Bult C.J."/>
            <person name="Kerlavage A.R."/>
            <person name="Sutton G.G."/>
            <person name="Kelley J.M."/>
            <person name="Fritchman J.L."/>
            <person name="Weidman J.F."/>
            <person name="Small K.V."/>
            <person name="Sandusky M."/>
            <person name="Fuhrmann J.L."/>
            <person name="Nguyen D.T."/>
            <person name="Utterback T.R."/>
            <person name="Saudek D.M."/>
            <person name="Phillips C.A."/>
            <person name="Merrick J.M."/>
            <person name="Tomb J.-F."/>
            <person name="Dougherty B.A."/>
            <person name="Bott K.F."/>
            <person name="Hu P.-C."/>
            <person name="Lucier T.S."/>
            <person name="Peterson S.N."/>
            <person name="Smith H.O."/>
            <person name="Hutchison C.A. III"/>
            <person name="Venter J.C."/>
        </authorList>
    </citation>
    <scope>NUCLEOTIDE SEQUENCE [LARGE SCALE GENOMIC DNA]</scope>
    <source>
        <strain>ATCC 33530 / DSM 19775 / NCTC 10195 / G37</strain>
    </source>
</reference>
<accession>P47433</accession>
<protein>
    <recommendedName>
        <fullName>Putative ABC transporter ATP-binding protein MG187</fullName>
    </recommendedName>
</protein>
<dbReference type="EMBL" id="L43967">
    <property type="protein sequence ID" value="AAC71406.1"/>
    <property type="molecule type" value="Genomic_DNA"/>
</dbReference>
<dbReference type="PIR" id="G64220">
    <property type="entry name" value="G64220"/>
</dbReference>
<dbReference type="RefSeq" id="WP_010869365.1">
    <property type="nucleotide sequence ID" value="NC_000908.2"/>
</dbReference>
<dbReference type="FunCoup" id="P47433">
    <property type="interactions" value="176"/>
</dbReference>
<dbReference type="STRING" id="243273.MG_187"/>
<dbReference type="GeneID" id="88282319"/>
<dbReference type="KEGG" id="mge:MG_187"/>
<dbReference type="eggNOG" id="COG3842">
    <property type="taxonomic scope" value="Bacteria"/>
</dbReference>
<dbReference type="HOGENOM" id="CLU_000604_72_2_14"/>
<dbReference type="InParanoid" id="P47433"/>
<dbReference type="OrthoDB" id="9784450at2"/>
<dbReference type="BioCyc" id="MGEN243273:G1GJ2-215-MONOMER"/>
<dbReference type="Proteomes" id="UP000000807">
    <property type="component" value="Chromosome"/>
</dbReference>
<dbReference type="GO" id="GO:0055052">
    <property type="term" value="C:ATP-binding cassette (ABC) transporter complex, substrate-binding subunit-containing"/>
    <property type="evidence" value="ECO:0000318"/>
    <property type="project" value="GO_Central"/>
</dbReference>
<dbReference type="GO" id="GO:0005524">
    <property type="term" value="F:ATP binding"/>
    <property type="evidence" value="ECO:0007669"/>
    <property type="project" value="UniProtKB-KW"/>
</dbReference>
<dbReference type="GO" id="GO:0016887">
    <property type="term" value="F:ATP hydrolysis activity"/>
    <property type="evidence" value="ECO:0007669"/>
    <property type="project" value="InterPro"/>
</dbReference>
<dbReference type="FunFam" id="3.40.50.300:FF:006170">
    <property type="entry name" value="Putative ABC transporter ATP-binding protein MG187"/>
    <property type="match status" value="1"/>
</dbReference>
<dbReference type="Gene3D" id="2.40.50.100">
    <property type="match status" value="1"/>
</dbReference>
<dbReference type="Gene3D" id="2.40.50.140">
    <property type="entry name" value="Nucleic acid-binding proteins"/>
    <property type="match status" value="1"/>
</dbReference>
<dbReference type="Gene3D" id="3.40.50.300">
    <property type="entry name" value="P-loop containing nucleotide triphosphate hydrolases"/>
    <property type="match status" value="2"/>
</dbReference>
<dbReference type="InterPro" id="IPR003593">
    <property type="entry name" value="AAA+_ATPase"/>
</dbReference>
<dbReference type="InterPro" id="IPR003439">
    <property type="entry name" value="ABC_transporter-like_ATP-bd"/>
</dbReference>
<dbReference type="InterPro" id="IPR017871">
    <property type="entry name" value="ABC_transporter-like_CS"/>
</dbReference>
<dbReference type="InterPro" id="IPR047641">
    <property type="entry name" value="ABC_transpr_MalK/UgpC-like"/>
</dbReference>
<dbReference type="InterPro" id="IPR008995">
    <property type="entry name" value="Mo/tungstate-bd_C_term_dom"/>
</dbReference>
<dbReference type="InterPro" id="IPR012340">
    <property type="entry name" value="NA-bd_OB-fold"/>
</dbReference>
<dbReference type="InterPro" id="IPR027417">
    <property type="entry name" value="P-loop_NTPase"/>
</dbReference>
<dbReference type="PANTHER" id="PTHR43875">
    <property type="entry name" value="MALTODEXTRIN IMPORT ATP-BINDING PROTEIN MSMX"/>
    <property type="match status" value="1"/>
</dbReference>
<dbReference type="PANTHER" id="PTHR43875:SF1">
    <property type="entry name" value="OSMOPROTECTIVE COMPOUNDS UPTAKE ATP-BINDING PROTEIN GGTA"/>
    <property type="match status" value="1"/>
</dbReference>
<dbReference type="Pfam" id="PF00005">
    <property type="entry name" value="ABC_tran"/>
    <property type="match status" value="2"/>
</dbReference>
<dbReference type="SMART" id="SM00382">
    <property type="entry name" value="AAA"/>
    <property type="match status" value="1"/>
</dbReference>
<dbReference type="SUPFAM" id="SSF50331">
    <property type="entry name" value="MOP-like"/>
    <property type="match status" value="1"/>
</dbReference>
<dbReference type="SUPFAM" id="SSF52540">
    <property type="entry name" value="P-loop containing nucleoside triphosphate hydrolases"/>
    <property type="match status" value="1"/>
</dbReference>
<dbReference type="PROSITE" id="PS00211">
    <property type="entry name" value="ABC_TRANSPORTER_1"/>
    <property type="match status" value="1"/>
</dbReference>
<dbReference type="PROSITE" id="PS50893">
    <property type="entry name" value="ABC_TRANSPORTER_2"/>
    <property type="match status" value="1"/>
</dbReference>
<keyword id="KW-0067">ATP-binding</keyword>
<keyword id="KW-0547">Nucleotide-binding</keyword>
<keyword id="KW-1185">Reference proteome</keyword>
<keyword id="KW-0813">Transport</keyword>
<organism>
    <name type="scientific">Mycoplasma genitalium (strain ATCC 33530 / DSM 19775 / NCTC 10195 / G37)</name>
    <name type="common">Mycoplasmoides genitalium</name>
    <dbReference type="NCBI Taxonomy" id="243273"/>
    <lineage>
        <taxon>Bacteria</taxon>
        <taxon>Bacillati</taxon>
        <taxon>Mycoplasmatota</taxon>
        <taxon>Mycoplasmoidales</taxon>
        <taxon>Mycoplasmoidaceae</taxon>
        <taxon>Mycoplasmoides</taxon>
    </lineage>
</organism>
<sequence length="585" mass="66949">MANNKSAIELKNIVVDFGESVAIDNINLSVEKHQLVSLLGPSGCGKTTTLAVIAGLIKPTSGQVLFNGYDVTKKPPQERKLGLVFQNYALYPHMNVFENIVFPLYSDNSWKQAVLEKNSVANHEINCLLLTSNGASVQEIDQLNKLFHDSIEKPKQIQYQINDLNVSVFKNLNELTANLKLIPSKHQFAITNLNKQTLKQINELEAEFKTKWKLQKQTPIKSGVEHNAKLQAIKQHFSYEKQRLKKHYFKTKVELKQTLVENLKLVKKAISEQTKLIKQSSDYTKLKQLKRLIKVEPNQLKKQYKVFLNQLIKNYSLKTDKLTDTQLNEIEQIKTRIVSIKQFINKTALEVANKLAITKILTKRPDKISGGQQQRVAIARAIVRRPKLLLMDEPLSNLDAKLRVQTRQWIRQFQQELQITTVFVTHDQEEAMSISDVIVCMSTGKVQQIGTPSELYLKPANEFVARFLGTPEMNIIECSVKNNQLFWNNHLLVTESFKLNVEKLLVGFRYEQLVVTTNKSSLQAKLINIENLGKHLVATISLFDTTLSMRLELNSHLKVGDSLNFIIKANNLHFFDIDTKQRIEI</sequence>
<feature type="chain" id="PRO_0000093241" description="Putative ABC transporter ATP-binding protein MG187">
    <location>
        <begin position="1"/>
        <end position="585"/>
    </location>
</feature>
<feature type="domain" description="ABC transporter" evidence="1">
    <location>
        <begin position="8"/>
        <end position="468"/>
    </location>
</feature>
<feature type="binding site" evidence="1">
    <location>
        <begin position="40"/>
        <end position="47"/>
    </location>
    <ligand>
        <name>ATP</name>
        <dbReference type="ChEBI" id="CHEBI:30616"/>
    </ligand>
</feature>
<evidence type="ECO:0000255" key="1">
    <source>
        <dbReference type="PROSITE-ProRule" id="PRU00434"/>
    </source>
</evidence>
<evidence type="ECO:0000305" key="2"/>
<proteinExistence type="inferred from homology"/>
<comment type="similarity">
    <text evidence="2">Belongs to the ABC transporter superfamily.</text>
</comment>
<name>Y187_MYCGE</name>
<gene>
    <name type="ordered locus">MG187</name>
</gene>